<proteinExistence type="predicted"/>
<accession>O83209</accession>
<protein>
    <recommendedName>
        <fullName>Uncharacterized protein TP_0179</fullName>
    </recommendedName>
</protein>
<dbReference type="EMBL" id="AE000520">
    <property type="protein sequence ID" value="AAC65193.1"/>
    <property type="molecule type" value="Genomic_DNA"/>
</dbReference>
<dbReference type="PIR" id="E71353">
    <property type="entry name" value="E71353"/>
</dbReference>
<dbReference type="SMR" id="O83209"/>
<dbReference type="STRING" id="243276.TP_0179"/>
<dbReference type="EnsemblBacteria" id="AAC65193">
    <property type="protein sequence ID" value="AAC65193"/>
    <property type="gene ID" value="TP_0179"/>
</dbReference>
<dbReference type="KEGG" id="tpa:TP_0179"/>
<dbReference type="KEGG" id="tpw:TPANIC_0179"/>
<dbReference type="eggNOG" id="ENOG503478X">
    <property type="taxonomic scope" value="Bacteria"/>
</dbReference>
<dbReference type="HOGENOM" id="CLU_422064_0_0_12"/>
<dbReference type="OrthoDB" id="346175at2"/>
<dbReference type="Proteomes" id="UP000000811">
    <property type="component" value="Chromosome"/>
</dbReference>
<evidence type="ECO:0000256" key="1">
    <source>
        <dbReference type="SAM" id="MobiDB-lite"/>
    </source>
</evidence>
<keyword id="KW-1185">Reference proteome</keyword>
<feature type="chain" id="PRO_0000202210" description="Uncharacterized protein TP_0179">
    <location>
        <begin position="1"/>
        <end position="627"/>
    </location>
</feature>
<feature type="region of interest" description="Disordered" evidence="1">
    <location>
        <begin position="57"/>
        <end position="82"/>
    </location>
</feature>
<feature type="region of interest" description="Disordered" evidence="1">
    <location>
        <begin position="96"/>
        <end position="121"/>
    </location>
</feature>
<feature type="region of interest" description="Disordered" evidence="1">
    <location>
        <begin position="160"/>
        <end position="184"/>
    </location>
</feature>
<feature type="region of interest" description="Disordered" evidence="1">
    <location>
        <begin position="198"/>
        <end position="232"/>
    </location>
</feature>
<feature type="region of interest" description="Disordered" evidence="1">
    <location>
        <begin position="247"/>
        <end position="277"/>
    </location>
</feature>
<feature type="region of interest" description="Disordered" evidence="1">
    <location>
        <begin position="335"/>
        <end position="358"/>
    </location>
</feature>
<feature type="region of interest" description="Disordered" evidence="1">
    <location>
        <begin position="449"/>
        <end position="579"/>
    </location>
</feature>
<feature type="compositionally biased region" description="Low complexity" evidence="1">
    <location>
        <begin position="169"/>
        <end position="183"/>
    </location>
</feature>
<feature type="compositionally biased region" description="Low complexity" evidence="1">
    <location>
        <begin position="336"/>
        <end position="357"/>
    </location>
</feature>
<feature type="compositionally biased region" description="Basic and acidic residues" evidence="1">
    <location>
        <begin position="450"/>
        <end position="464"/>
    </location>
</feature>
<name>Y179_TREPA</name>
<gene>
    <name type="ordered locus">TP_0179</name>
</gene>
<reference key="1">
    <citation type="journal article" date="1998" name="Science">
        <title>Complete genome sequence of Treponema pallidum, the syphilis spirochete.</title>
        <authorList>
            <person name="Fraser C.M."/>
            <person name="Norris S.J."/>
            <person name="Weinstock G.M."/>
            <person name="White O."/>
            <person name="Sutton G.G."/>
            <person name="Dodson R.J."/>
            <person name="Gwinn M.L."/>
            <person name="Hickey E.K."/>
            <person name="Clayton R.A."/>
            <person name="Ketchum K.A."/>
            <person name="Sodergren E."/>
            <person name="Hardham J.M."/>
            <person name="McLeod M.P."/>
            <person name="Salzberg S.L."/>
            <person name="Peterson J.D."/>
            <person name="Khalak H.G."/>
            <person name="Richardson D.L."/>
            <person name="Howell J.K."/>
            <person name="Chidambaram M."/>
            <person name="Utterback T.R."/>
            <person name="McDonald L.A."/>
            <person name="Artiach P."/>
            <person name="Bowman C."/>
            <person name="Cotton M.D."/>
            <person name="Fujii C."/>
            <person name="Garland S.A."/>
            <person name="Hatch B."/>
            <person name="Horst K."/>
            <person name="Roberts K.M."/>
            <person name="Sandusky M."/>
            <person name="Weidman J.F."/>
            <person name="Smith H.O."/>
            <person name="Venter J.C."/>
        </authorList>
    </citation>
    <scope>NUCLEOTIDE SEQUENCE [LARGE SCALE GENOMIC DNA]</scope>
    <source>
        <strain>Nichols</strain>
    </source>
</reference>
<sequence>MTQALQVPSAPARCRHLRRKNGVLLRIVEKTDRTRYAHALRHGCRHRMCEGVHGTEEDAMGSESAEMDSPHATARPQEQGEDRAWDACGVWVKVPPEAQEPPVSSGGPEDPEAPAQHAPPGARVDAVRHHVYRALPVQSSAEDSRGFVDLSVEDEVLARGCSHAPGGESSSDQAADAPAGDAAYSEVPSFDDLVTRTAQSQDDRVDLSAAMSSVVTEEPPEPRGCSMPCPSGSCDTTEFDDLLSSLSHDAPEYPVDSDPITYSASEPSSEGPVRGAPFSDVDAVAQSLMGDAQVAAQGAQASTSGDASTDLLLKIAQEISSIRADLDQLKGTFSRQAGAEPAQAPATAPAPEGTEAAYSGFFCDDDPDETIALTNDELNNILITSEFTEEDGKDSAADAFGGELSGFESSHIGSAAGDFSYLEEDDHAAARVAQEQWVQQGRATLGNEVFDVKEQGAHADRDAAADPSPVAKDDASPEAQRAHVSSTGLDAAGAEQPLNTENVFDDEDTQREDTSFPLPEEQELDVSVPSLEFSAPHAIETAASESSEVATPVAIESPPQSEAARPAQGDSANLAPPLSKSLADEVRSVLGYMDRLLESLPEEKIEEFARSEYFHTYKHLFDELGIS</sequence>
<organism>
    <name type="scientific">Treponema pallidum (strain Nichols)</name>
    <dbReference type="NCBI Taxonomy" id="243276"/>
    <lineage>
        <taxon>Bacteria</taxon>
        <taxon>Pseudomonadati</taxon>
        <taxon>Spirochaetota</taxon>
        <taxon>Spirochaetia</taxon>
        <taxon>Spirochaetales</taxon>
        <taxon>Treponemataceae</taxon>
        <taxon>Treponema</taxon>
    </lineage>
</organism>